<sequence>MVLKAEHTRSPSATLPSNVPSCRSLSSSEDGPSGPSSLADGGLAHNLQDSVRHRILYLSEQLRVEKASRDGNTVSYLKLVSKADRHQVPHIQQAFEKVNQRASATIAQIEHRLHQCHQQLQELEEGCRPEGLLLMAESDPANCEPPSEKALLSEPPEPGGEDGPVNLPHASRPFILESRFQSLQQGTCLETEDVAQQQNLLLQKVKAELEEAKRFHISLQESYHSLKERSLTDLQLLLESLQEEKCRQALMEEQVNGRLQGQLNEIYNLKHNLACSEERMAYLSYERAKEIWEITETFKSRISKLEMLQQVTQLEAAEHLQSRPPQMLFKFLSPRLSLATVLLVFVSTLCACPSSLISSRLCTCTMLMLIGLGVLAWQRWRAIPATDWQEWVPSRCRLYSKDSGPPADGP</sequence>
<keyword id="KW-0175">Coiled coil</keyword>
<keyword id="KW-0472">Membrane</keyword>
<keyword id="KW-1267">Proteomics identification</keyword>
<keyword id="KW-1185">Reference proteome</keyword>
<keyword id="KW-0812">Transmembrane</keyword>
<keyword id="KW-1133">Transmembrane helix</keyword>
<protein>
    <recommendedName>
        <fullName>Testis-specific protein TEX28</fullName>
    </recommendedName>
</protein>
<name>TEX28_HUMAN</name>
<organism>
    <name type="scientific">Homo sapiens</name>
    <name type="common">Human</name>
    <dbReference type="NCBI Taxonomy" id="9606"/>
    <lineage>
        <taxon>Eukaryota</taxon>
        <taxon>Metazoa</taxon>
        <taxon>Chordata</taxon>
        <taxon>Craniata</taxon>
        <taxon>Vertebrata</taxon>
        <taxon>Euteleostomi</taxon>
        <taxon>Mammalia</taxon>
        <taxon>Eutheria</taxon>
        <taxon>Euarchontoglires</taxon>
        <taxon>Primates</taxon>
        <taxon>Haplorrhini</taxon>
        <taxon>Catarrhini</taxon>
        <taxon>Hominidae</taxon>
        <taxon>Homo</taxon>
    </lineage>
</organism>
<feature type="chain" id="PRO_0000184594" description="Testis-specific protein TEX28">
    <location>
        <begin position="1"/>
        <end position="410"/>
    </location>
</feature>
<feature type="transmembrane region" description="Helical" evidence="1">
    <location>
        <begin position="336"/>
        <end position="358"/>
    </location>
</feature>
<feature type="region of interest" description="Disordered" evidence="2">
    <location>
        <begin position="1"/>
        <end position="43"/>
    </location>
</feature>
<feature type="region of interest" description="Disordered" evidence="2">
    <location>
        <begin position="137"/>
        <end position="164"/>
    </location>
</feature>
<feature type="coiled-coil region" evidence="1">
    <location>
        <begin position="93"/>
        <end position="128"/>
    </location>
</feature>
<feature type="coiled-coil region" evidence="1">
    <location>
        <begin position="185"/>
        <end position="245"/>
    </location>
</feature>
<feature type="compositionally biased region" description="Polar residues" evidence="2">
    <location>
        <begin position="10"/>
        <end position="23"/>
    </location>
</feature>
<feature type="compositionally biased region" description="Low complexity" evidence="2">
    <location>
        <begin position="24"/>
        <end position="38"/>
    </location>
</feature>
<dbReference type="EMBL" id="U93720">
    <property type="protein sequence ID" value="AAB71379.1"/>
    <property type="molecule type" value="mRNA"/>
</dbReference>
<dbReference type="EMBL" id="Z46936">
    <property type="protein sequence ID" value="CAI41959.1"/>
    <property type="molecule type" value="Genomic_DNA"/>
</dbReference>
<dbReference type="EMBL" id="AC092402">
    <property type="protein sequence ID" value="CAI41959.1"/>
    <property type="status" value="JOINED"/>
    <property type="molecule type" value="Genomic_DNA"/>
</dbReference>
<dbReference type="EMBL" id="Z68193">
    <property type="protein sequence ID" value="CAI43243.1"/>
    <property type="molecule type" value="Genomic_DNA"/>
</dbReference>
<dbReference type="EMBL" id="AC092402">
    <property type="protein sequence ID" value="CAI43243.1"/>
    <property type="status" value="JOINED"/>
    <property type="molecule type" value="Genomic_DNA"/>
</dbReference>
<dbReference type="EMBL" id="CH471172">
    <property type="protein sequence ID" value="EAW72754.1"/>
    <property type="molecule type" value="Genomic_DNA"/>
</dbReference>
<dbReference type="EMBL" id="CH471172">
    <property type="protein sequence ID" value="EAW72755.1"/>
    <property type="molecule type" value="Genomic_DNA"/>
</dbReference>
<dbReference type="EMBL" id="BC026183">
    <property type="protein sequence ID" value="AAH26183.1"/>
    <property type="molecule type" value="mRNA"/>
</dbReference>
<dbReference type="CCDS" id="CCDS14744.2"/>
<dbReference type="RefSeq" id="NP_001192130.1">
    <property type="nucleotide sequence ID" value="NM_001205201.2"/>
</dbReference>
<dbReference type="RefSeq" id="NP_001577.1">
    <property type="nucleotide sequence ID" value="NM_001586.3"/>
</dbReference>
<dbReference type="SMR" id="O15482"/>
<dbReference type="BioGRID" id="107907">
    <property type="interactions" value="33"/>
</dbReference>
<dbReference type="FunCoup" id="O15482">
    <property type="interactions" value="49"/>
</dbReference>
<dbReference type="IntAct" id="O15482">
    <property type="interactions" value="32"/>
</dbReference>
<dbReference type="STRING" id="9606.ENSP00000478834"/>
<dbReference type="iPTMnet" id="O15482"/>
<dbReference type="PhosphoSitePlus" id="O15482"/>
<dbReference type="BioMuta" id="TEX28"/>
<dbReference type="MassIVE" id="O15482"/>
<dbReference type="PaxDb" id="9606-ENSP00000478834"/>
<dbReference type="PeptideAtlas" id="O15482"/>
<dbReference type="ProteomicsDB" id="48687"/>
<dbReference type="Antibodypedia" id="73153">
    <property type="antibodies" value="42 antibodies from 13 providers"/>
</dbReference>
<dbReference type="DNASU" id="1527"/>
<dbReference type="Ensembl" id="ENST00000610938.1">
    <property type="protein sequence ID" value="ENSP00000479148.1"/>
    <property type="gene ID" value="ENSG00000278057.4"/>
</dbReference>
<dbReference type="Ensembl" id="ENST00000617225.5">
    <property type="protein sequence ID" value="ENSP00000482010.1"/>
    <property type="gene ID" value="ENSG00000278057.4"/>
</dbReference>
<dbReference type="Ensembl" id="ENST00000619903.4">
    <property type="protein sequence ID" value="ENSP00000478834.1"/>
    <property type="gene ID" value="ENSG00000278057.4"/>
</dbReference>
<dbReference type="GeneID" id="1527"/>
<dbReference type="KEGG" id="hsa:1527"/>
<dbReference type="MANE-Select" id="ENST00000617225.5">
    <property type="protein sequence ID" value="ENSP00000482010.1"/>
    <property type="RefSeq nucleotide sequence ID" value="NM_001586.3"/>
    <property type="RefSeq protein sequence ID" value="NP_001577.1"/>
</dbReference>
<dbReference type="UCSC" id="uc033fba.2">
    <property type="organism name" value="human"/>
</dbReference>
<dbReference type="AGR" id="HGNC:2563"/>
<dbReference type="CTD" id="1527"/>
<dbReference type="DisGeNET" id="1527"/>
<dbReference type="GeneCards" id="TEX28"/>
<dbReference type="GeneCards" id="TEX28P1"/>
<dbReference type="GeneCards" id="TEX28P2"/>
<dbReference type="HGNC" id="HGNC:2563">
    <property type="gene designation" value="TEX28"/>
</dbReference>
<dbReference type="HGNC" id="HGNC:33356">
    <property type="gene designation" value="TEX28P1"/>
</dbReference>
<dbReference type="HGNC" id="HGNC:33357">
    <property type="gene designation" value="TEX28P2"/>
</dbReference>
<dbReference type="HPA" id="ENSG00000278057">
    <property type="expression patterns" value="Tissue enriched (testis)"/>
</dbReference>
<dbReference type="MIM" id="300092">
    <property type="type" value="gene"/>
</dbReference>
<dbReference type="neXtProt" id="NX_O15482"/>
<dbReference type="PharmGKB" id="PA162405646"/>
<dbReference type="VEuPathDB" id="HostDB:ENSG00000278057"/>
<dbReference type="eggNOG" id="KOG3850">
    <property type="taxonomic scope" value="Eukaryota"/>
</dbReference>
<dbReference type="GeneTree" id="ENSGT00940000162843"/>
<dbReference type="HOGENOM" id="CLU_019951_0_1_1"/>
<dbReference type="InParanoid" id="O15482"/>
<dbReference type="OMA" id="QNLACTE"/>
<dbReference type="OrthoDB" id="9047689at2759"/>
<dbReference type="PAN-GO" id="O15482">
    <property type="GO annotations" value="1 GO annotation based on evolutionary models"/>
</dbReference>
<dbReference type="PhylomeDB" id="O15482"/>
<dbReference type="TreeFam" id="TF316292"/>
<dbReference type="PathwayCommons" id="O15482"/>
<dbReference type="SignaLink" id="O15482"/>
<dbReference type="BioGRID-ORCS" id="1527">
    <property type="hits" value="10 hits in 642 CRISPR screens"/>
</dbReference>
<dbReference type="GenomeRNAi" id="1527"/>
<dbReference type="Pharos" id="O15482">
    <property type="development level" value="Tdark"/>
</dbReference>
<dbReference type="PRO" id="PR:O15482"/>
<dbReference type="Proteomes" id="UP000005640">
    <property type="component" value="Chromosome X"/>
</dbReference>
<dbReference type="RNAct" id="O15482">
    <property type="molecule type" value="protein"/>
</dbReference>
<dbReference type="Bgee" id="ENSG00000278057">
    <property type="expression patterns" value="Expressed in primordial germ cell in gonad and 17 other cell types or tissues"/>
</dbReference>
<dbReference type="GO" id="GO:0012505">
    <property type="term" value="C:endomembrane system"/>
    <property type="evidence" value="ECO:0000318"/>
    <property type="project" value="GO_Central"/>
</dbReference>
<dbReference type="GO" id="GO:0016020">
    <property type="term" value="C:membrane"/>
    <property type="evidence" value="ECO:0007669"/>
    <property type="project" value="UniProtKB-SubCell"/>
</dbReference>
<dbReference type="InterPro" id="IPR017387">
    <property type="entry name" value="Testis-specific_TEX28"/>
</dbReference>
<dbReference type="InterPro" id="IPR019394">
    <property type="entry name" value="TEX28/TMCC"/>
</dbReference>
<dbReference type="PANTHER" id="PTHR17613">
    <property type="entry name" value="CEREBRAL PROTEIN-11-RELATED"/>
    <property type="match status" value="1"/>
</dbReference>
<dbReference type="PANTHER" id="PTHR17613:SF10">
    <property type="entry name" value="TESTIS-SPECIFIC PROTEIN TEX28"/>
    <property type="match status" value="1"/>
</dbReference>
<dbReference type="Pfam" id="PF10267">
    <property type="entry name" value="Tmemb_cc2"/>
    <property type="match status" value="2"/>
</dbReference>
<dbReference type="PIRSF" id="PIRSF038100">
    <property type="entry name" value="Testis-specific_TEX28"/>
    <property type="match status" value="1"/>
</dbReference>
<accession>O15482</accession>
<accession>B1B1E8</accession>
<accession>D3DWW5</accession>
<reference key="1">
    <citation type="journal article" date="1997" name="Genomics">
        <title>Identification of a gene within the tandem array of red and green color pigment genes.</title>
        <authorList>
            <person name="Hanna M.C."/>
            <person name="Platts J.T."/>
            <person name="Kirkness E.F."/>
        </authorList>
    </citation>
    <scope>NUCLEOTIDE SEQUENCE [MRNA]</scope>
    <source>
        <tissue>Testis</tissue>
    </source>
</reference>
<reference key="2">
    <citation type="journal article" date="2005" name="Nature">
        <title>The DNA sequence of the human X chromosome.</title>
        <authorList>
            <person name="Ross M.T."/>
            <person name="Grafham D.V."/>
            <person name="Coffey A.J."/>
            <person name="Scherer S."/>
            <person name="McLay K."/>
            <person name="Muzny D."/>
            <person name="Platzer M."/>
            <person name="Howell G.R."/>
            <person name="Burrows C."/>
            <person name="Bird C.P."/>
            <person name="Frankish A."/>
            <person name="Lovell F.L."/>
            <person name="Howe K.L."/>
            <person name="Ashurst J.L."/>
            <person name="Fulton R.S."/>
            <person name="Sudbrak R."/>
            <person name="Wen G."/>
            <person name="Jones M.C."/>
            <person name="Hurles M.E."/>
            <person name="Andrews T.D."/>
            <person name="Scott C.E."/>
            <person name="Searle S."/>
            <person name="Ramser J."/>
            <person name="Whittaker A."/>
            <person name="Deadman R."/>
            <person name="Carter N.P."/>
            <person name="Hunt S.E."/>
            <person name="Chen R."/>
            <person name="Cree A."/>
            <person name="Gunaratne P."/>
            <person name="Havlak P."/>
            <person name="Hodgson A."/>
            <person name="Metzker M.L."/>
            <person name="Richards S."/>
            <person name="Scott G."/>
            <person name="Steffen D."/>
            <person name="Sodergren E."/>
            <person name="Wheeler D.A."/>
            <person name="Worley K.C."/>
            <person name="Ainscough R."/>
            <person name="Ambrose K.D."/>
            <person name="Ansari-Lari M.A."/>
            <person name="Aradhya S."/>
            <person name="Ashwell R.I."/>
            <person name="Babbage A.K."/>
            <person name="Bagguley C.L."/>
            <person name="Ballabio A."/>
            <person name="Banerjee R."/>
            <person name="Barker G.E."/>
            <person name="Barlow K.F."/>
            <person name="Barrett I.P."/>
            <person name="Bates K.N."/>
            <person name="Beare D.M."/>
            <person name="Beasley H."/>
            <person name="Beasley O."/>
            <person name="Beck A."/>
            <person name="Bethel G."/>
            <person name="Blechschmidt K."/>
            <person name="Brady N."/>
            <person name="Bray-Allen S."/>
            <person name="Bridgeman A.M."/>
            <person name="Brown A.J."/>
            <person name="Brown M.J."/>
            <person name="Bonnin D."/>
            <person name="Bruford E.A."/>
            <person name="Buhay C."/>
            <person name="Burch P."/>
            <person name="Burford D."/>
            <person name="Burgess J."/>
            <person name="Burrill W."/>
            <person name="Burton J."/>
            <person name="Bye J.M."/>
            <person name="Carder C."/>
            <person name="Carrel L."/>
            <person name="Chako J."/>
            <person name="Chapman J.C."/>
            <person name="Chavez D."/>
            <person name="Chen E."/>
            <person name="Chen G."/>
            <person name="Chen Y."/>
            <person name="Chen Z."/>
            <person name="Chinault C."/>
            <person name="Ciccodicola A."/>
            <person name="Clark S.Y."/>
            <person name="Clarke G."/>
            <person name="Clee C.M."/>
            <person name="Clegg S."/>
            <person name="Clerc-Blankenburg K."/>
            <person name="Clifford K."/>
            <person name="Cobley V."/>
            <person name="Cole C.G."/>
            <person name="Conquer J.S."/>
            <person name="Corby N."/>
            <person name="Connor R.E."/>
            <person name="David R."/>
            <person name="Davies J."/>
            <person name="Davis C."/>
            <person name="Davis J."/>
            <person name="Delgado O."/>
            <person name="Deshazo D."/>
            <person name="Dhami P."/>
            <person name="Ding Y."/>
            <person name="Dinh H."/>
            <person name="Dodsworth S."/>
            <person name="Draper H."/>
            <person name="Dugan-Rocha S."/>
            <person name="Dunham A."/>
            <person name="Dunn M."/>
            <person name="Durbin K.J."/>
            <person name="Dutta I."/>
            <person name="Eades T."/>
            <person name="Ellwood M."/>
            <person name="Emery-Cohen A."/>
            <person name="Errington H."/>
            <person name="Evans K.L."/>
            <person name="Faulkner L."/>
            <person name="Francis F."/>
            <person name="Frankland J."/>
            <person name="Fraser A.E."/>
            <person name="Galgoczy P."/>
            <person name="Gilbert J."/>
            <person name="Gill R."/>
            <person name="Gloeckner G."/>
            <person name="Gregory S.G."/>
            <person name="Gribble S."/>
            <person name="Griffiths C."/>
            <person name="Grocock R."/>
            <person name="Gu Y."/>
            <person name="Gwilliam R."/>
            <person name="Hamilton C."/>
            <person name="Hart E.A."/>
            <person name="Hawes A."/>
            <person name="Heath P.D."/>
            <person name="Heitmann K."/>
            <person name="Hennig S."/>
            <person name="Hernandez J."/>
            <person name="Hinzmann B."/>
            <person name="Ho S."/>
            <person name="Hoffs M."/>
            <person name="Howden P.J."/>
            <person name="Huckle E.J."/>
            <person name="Hume J."/>
            <person name="Hunt P.J."/>
            <person name="Hunt A.R."/>
            <person name="Isherwood J."/>
            <person name="Jacob L."/>
            <person name="Johnson D."/>
            <person name="Jones S."/>
            <person name="de Jong P.J."/>
            <person name="Joseph S.S."/>
            <person name="Keenan S."/>
            <person name="Kelly S."/>
            <person name="Kershaw J.K."/>
            <person name="Khan Z."/>
            <person name="Kioschis P."/>
            <person name="Klages S."/>
            <person name="Knights A.J."/>
            <person name="Kosiura A."/>
            <person name="Kovar-Smith C."/>
            <person name="Laird G.K."/>
            <person name="Langford C."/>
            <person name="Lawlor S."/>
            <person name="Leversha M."/>
            <person name="Lewis L."/>
            <person name="Liu W."/>
            <person name="Lloyd C."/>
            <person name="Lloyd D.M."/>
            <person name="Loulseged H."/>
            <person name="Loveland J.E."/>
            <person name="Lovell J.D."/>
            <person name="Lozado R."/>
            <person name="Lu J."/>
            <person name="Lyne R."/>
            <person name="Ma J."/>
            <person name="Maheshwari M."/>
            <person name="Matthews L.H."/>
            <person name="McDowall J."/>
            <person name="McLaren S."/>
            <person name="McMurray A."/>
            <person name="Meidl P."/>
            <person name="Meitinger T."/>
            <person name="Milne S."/>
            <person name="Miner G."/>
            <person name="Mistry S.L."/>
            <person name="Morgan M."/>
            <person name="Morris S."/>
            <person name="Mueller I."/>
            <person name="Mullikin J.C."/>
            <person name="Nguyen N."/>
            <person name="Nordsiek G."/>
            <person name="Nyakatura G."/>
            <person name="O'dell C.N."/>
            <person name="Okwuonu G."/>
            <person name="Palmer S."/>
            <person name="Pandian R."/>
            <person name="Parker D."/>
            <person name="Parrish J."/>
            <person name="Pasternak S."/>
            <person name="Patel D."/>
            <person name="Pearce A.V."/>
            <person name="Pearson D.M."/>
            <person name="Pelan S.E."/>
            <person name="Perez L."/>
            <person name="Porter K.M."/>
            <person name="Ramsey Y."/>
            <person name="Reichwald K."/>
            <person name="Rhodes S."/>
            <person name="Ridler K.A."/>
            <person name="Schlessinger D."/>
            <person name="Schueler M.G."/>
            <person name="Sehra H.K."/>
            <person name="Shaw-Smith C."/>
            <person name="Shen H."/>
            <person name="Sheridan E.M."/>
            <person name="Shownkeen R."/>
            <person name="Skuce C.D."/>
            <person name="Smith M.L."/>
            <person name="Sotheran E.C."/>
            <person name="Steingruber H.E."/>
            <person name="Steward C.A."/>
            <person name="Storey R."/>
            <person name="Swann R.M."/>
            <person name="Swarbreck D."/>
            <person name="Tabor P.E."/>
            <person name="Taudien S."/>
            <person name="Taylor T."/>
            <person name="Teague B."/>
            <person name="Thomas K."/>
            <person name="Thorpe A."/>
            <person name="Timms K."/>
            <person name="Tracey A."/>
            <person name="Trevanion S."/>
            <person name="Tromans A.C."/>
            <person name="d'Urso M."/>
            <person name="Verduzco D."/>
            <person name="Villasana D."/>
            <person name="Waldron L."/>
            <person name="Wall M."/>
            <person name="Wang Q."/>
            <person name="Warren J."/>
            <person name="Warry G.L."/>
            <person name="Wei X."/>
            <person name="West A."/>
            <person name="Whitehead S.L."/>
            <person name="Whiteley M.N."/>
            <person name="Wilkinson J.E."/>
            <person name="Willey D.L."/>
            <person name="Williams G."/>
            <person name="Williams L."/>
            <person name="Williamson A."/>
            <person name="Williamson H."/>
            <person name="Wilming L."/>
            <person name="Woodmansey R.L."/>
            <person name="Wray P.W."/>
            <person name="Yen J."/>
            <person name="Zhang J."/>
            <person name="Zhou J."/>
            <person name="Zoghbi H."/>
            <person name="Zorilla S."/>
            <person name="Buck D."/>
            <person name="Reinhardt R."/>
            <person name="Poustka A."/>
            <person name="Rosenthal A."/>
            <person name="Lehrach H."/>
            <person name="Meindl A."/>
            <person name="Minx P.J."/>
            <person name="Hillier L.W."/>
            <person name="Willard H.F."/>
            <person name="Wilson R.K."/>
            <person name="Waterston R.H."/>
            <person name="Rice C.M."/>
            <person name="Vaudin M."/>
            <person name="Coulson A."/>
            <person name="Nelson D.L."/>
            <person name="Weinstock G."/>
            <person name="Sulston J.E."/>
            <person name="Durbin R.M."/>
            <person name="Hubbard T."/>
            <person name="Gibbs R.A."/>
            <person name="Beck S."/>
            <person name="Rogers J."/>
            <person name="Bentley D.R."/>
        </authorList>
    </citation>
    <scope>NUCLEOTIDE SEQUENCE [LARGE SCALE GENOMIC DNA]</scope>
</reference>
<reference key="3">
    <citation type="submission" date="2005-09" db="EMBL/GenBank/DDBJ databases">
        <authorList>
            <person name="Mural R.J."/>
            <person name="Istrail S."/>
            <person name="Sutton G.G."/>
            <person name="Florea L."/>
            <person name="Halpern A.L."/>
            <person name="Mobarry C.M."/>
            <person name="Lippert R."/>
            <person name="Walenz B."/>
            <person name="Shatkay H."/>
            <person name="Dew I."/>
            <person name="Miller J.R."/>
            <person name="Flanigan M.J."/>
            <person name="Edwards N.J."/>
            <person name="Bolanos R."/>
            <person name="Fasulo D."/>
            <person name="Halldorsson B.V."/>
            <person name="Hannenhalli S."/>
            <person name="Turner R."/>
            <person name="Yooseph S."/>
            <person name="Lu F."/>
            <person name="Nusskern D.R."/>
            <person name="Shue B.C."/>
            <person name="Zheng X.H."/>
            <person name="Zhong F."/>
            <person name="Delcher A.L."/>
            <person name="Huson D.H."/>
            <person name="Kravitz S.A."/>
            <person name="Mouchard L."/>
            <person name="Reinert K."/>
            <person name="Remington K.A."/>
            <person name="Clark A.G."/>
            <person name="Waterman M.S."/>
            <person name="Eichler E.E."/>
            <person name="Adams M.D."/>
            <person name="Hunkapiller M.W."/>
            <person name="Myers E.W."/>
            <person name="Venter J.C."/>
        </authorList>
    </citation>
    <scope>NUCLEOTIDE SEQUENCE [LARGE SCALE GENOMIC DNA]</scope>
</reference>
<reference key="4">
    <citation type="journal article" date="2004" name="Genome Res.">
        <title>The status, quality, and expansion of the NIH full-length cDNA project: the Mammalian Gene Collection (MGC).</title>
        <authorList>
            <consortium name="The MGC Project Team"/>
        </authorList>
    </citation>
    <scope>NUCLEOTIDE SEQUENCE [LARGE SCALE MRNA]</scope>
    <source>
        <tissue>Testis</tissue>
    </source>
</reference>
<proteinExistence type="evidence at protein level"/>
<comment type="interaction">
    <interactant intactId="EBI-751954">
        <id>O15482</id>
    </interactant>
    <interactant intactId="EBI-1181367">
        <id>Q01850</id>
        <label>CDR2</label>
    </interactant>
    <organismsDiffer>false</organismsDiffer>
    <experiments>3</experiments>
</comment>
<comment type="interaction">
    <interactant intactId="EBI-751954">
        <id>O15482</id>
    </interactant>
    <interactant intactId="EBI-3044087">
        <id>Q7Z3Y8</id>
        <label>KRT27</label>
    </interactant>
    <organismsDiffer>false</organismsDiffer>
    <experiments>3</experiments>
</comment>
<comment type="interaction">
    <interactant intactId="EBI-751954">
        <id>O15482</id>
    </interactant>
    <interactant intactId="EBI-948001">
        <id>Q15323</id>
        <label>KRT31</label>
    </interactant>
    <organismsDiffer>false</organismsDiffer>
    <experiments>3</experiments>
</comment>
<comment type="interaction">
    <interactant intactId="EBI-751954">
        <id>O15482</id>
    </interactant>
    <interactant intactId="EBI-2800326">
        <id>Q9ULS5</id>
        <label>TMCC3</label>
    </interactant>
    <organismsDiffer>false</organismsDiffer>
    <experiments>6</experiments>
</comment>
<comment type="interaction">
    <interactant intactId="EBI-751954">
        <id>O15482</id>
    </interactant>
    <interactant intactId="EBI-625509">
        <id>Q8N720</id>
        <label>ZNF655</label>
    </interactant>
    <organismsDiffer>false</organismsDiffer>
    <experiments>3</experiments>
</comment>
<comment type="subcellular location">
    <subcellularLocation>
        <location evidence="3">Membrane</location>
        <topology evidence="3">Single-pass membrane protein</topology>
    </subcellularLocation>
</comment>
<comment type="tissue specificity">
    <text>Testis specific.</text>
</comment>
<comment type="similarity">
    <text evidence="3">Belongs to the TEX28 family.</text>
</comment>
<gene>
    <name type="primary">TEX28</name>
    <name type="synonym">CXorf2</name>
</gene>
<gene>
    <name type="primary">TEX28P1</name>
</gene>
<gene>
    <name type="primary">TEX28P2</name>
</gene>
<evidence type="ECO:0000255" key="1"/>
<evidence type="ECO:0000256" key="2">
    <source>
        <dbReference type="SAM" id="MobiDB-lite"/>
    </source>
</evidence>
<evidence type="ECO:0000305" key="3"/>